<dbReference type="EC" id="4.2.1.11" evidence="1"/>
<dbReference type="EMBL" id="BX842648">
    <property type="protein sequence ID" value="CAE78745.1"/>
    <property type="molecule type" value="Genomic_DNA"/>
</dbReference>
<dbReference type="RefSeq" id="WP_011163347.1">
    <property type="nucleotide sequence ID" value="NC_005363.1"/>
</dbReference>
<dbReference type="SMR" id="Q6MPQ2"/>
<dbReference type="STRING" id="264462.Bd0796"/>
<dbReference type="GeneID" id="93011872"/>
<dbReference type="KEGG" id="bba:Bd0796"/>
<dbReference type="eggNOG" id="COG0148">
    <property type="taxonomic scope" value="Bacteria"/>
</dbReference>
<dbReference type="HOGENOM" id="CLU_031223_2_1_7"/>
<dbReference type="UniPathway" id="UPA00109">
    <property type="reaction ID" value="UER00187"/>
</dbReference>
<dbReference type="Proteomes" id="UP000008080">
    <property type="component" value="Chromosome"/>
</dbReference>
<dbReference type="GO" id="GO:0009986">
    <property type="term" value="C:cell surface"/>
    <property type="evidence" value="ECO:0007669"/>
    <property type="project" value="UniProtKB-SubCell"/>
</dbReference>
<dbReference type="GO" id="GO:0005576">
    <property type="term" value="C:extracellular region"/>
    <property type="evidence" value="ECO:0007669"/>
    <property type="project" value="UniProtKB-SubCell"/>
</dbReference>
<dbReference type="GO" id="GO:0000015">
    <property type="term" value="C:phosphopyruvate hydratase complex"/>
    <property type="evidence" value="ECO:0007669"/>
    <property type="project" value="InterPro"/>
</dbReference>
<dbReference type="GO" id="GO:0000287">
    <property type="term" value="F:magnesium ion binding"/>
    <property type="evidence" value="ECO:0007669"/>
    <property type="project" value="UniProtKB-UniRule"/>
</dbReference>
<dbReference type="GO" id="GO:0004634">
    <property type="term" value="F:phosphopyruvate hydratase activity"/>
    <property type="evidence" value="ECO:0007669"/>
    <property type="project" value="UniProtKB-UniRule"/>
</dbReference>
<dbReference type="GO" id="GO:0006096">
    <property type="term" value="P:glycolytic process"/>
    <property type="evidence" value="ECO:0007669"/>
    <property type="project" value="UniProtKB-UniRule"/>
</dbReference>
<dbReference type="CDD" id="cd03313">
    <property type="entry name" value="enolase"/>
    <property type="match status" value="1"/>
</dbReference>
<dbReference type="FunFam" id="3.30.390.10:FF:000001">
    <property type="entry name" value="Enolase"/>
    <property type="match status" value="1"/>
</dbReference>
<dbReference type="Gene3D" id="3.20.20.120">
    <property type="entry name" value="Enolase-like C-terminal domain"/>
    <property type="match status" value="1"/>
</dbReference>
<dbReference type="Gene3D" id="3.30.390.10">
    <property type="entry name" value="Enolase-like, N-terminal domain"/>
    <property type="match status" value="1"/>
</dbReference>
<dbReference type="HAMAP" id="MF_00318">
    <property type="entry name" value="Enolase"/>
    <property type="match status" value="1"/>
</dbReference>
<dbReference type="InterPro" id="IPR000941">
    <property type="entry name" value="Enolase"/>
</dbReference>
<dbReference type="InterPro" id="IPR036849">
    <property type="entry name" value="Enolase-like_C_sf"/>
</dbReference>
<dbReference type="InterPro" id="IPR029017">
    <property type="entry name" value="Enolase-like_N"/>
</dbReference>
<dbReference type="InterPro" id="IPR020810">
    <property type="entry name" value="Enolase_C"/>
</dbReference>
<dbReference type="InterPro" id="IPR020809">
    <property type="entry name" value="Enolase_CS"/>
</dbReference>
<dbReference type="InterPro" id="IPR020811">
    <property type="entry name" value="Enolase_N"/>
</dbReference>
<dbReference type="NCBIfam" id="TIGR01060">
    <property type="entry name" value="eno"/>
    <property type="match status" value="1"/>
</dbReference>
<dbReference type="PANTHER" id="PTHR11902">
    <property type="entry name" value="ENOLASE"/>
    <property type="match status" value="1"/>
</dbReference>
<dbReference type="PANTHER" id="PTHR11902:SF1">
    <property type="entry name" value="ENOLASE"/>
    <property type="match status" value="1"/>
</dbReference>
<dbReference type="Pfam" id="PF00113">
    <property type="entry name" value="Enolase_C"/>
    <property type="match status" value="1"/>
</dbReference>
<dbReference type="Pfam" id="PF03952">
    <property type="entry name" value="Enolase_N"/>
    <property type="match status" value="1"/>
</dbReference>
<dbReference type="PIRSF" id="PIRSF001400">
    <property type="entry name" value="Enolase"/>
    <property type="match status" value="1"/>
</dbReference>
<dbReference type="PRINTS" id="PR00148">
    <property type="entry name" value="ENOLASE"/>
</dbReference>
<dbReference type="SFLD" id="SFLDF00002">
    <property type="entry name" value="enolase"/>
    <property type="match status" value="1"/>
</dbReference>
<dbReference type="SFLD" id="SFLDG00178">
    <property type="entry name" value="enolase"/>
    <property type="match status" value="1"/>
</dbReference>
<dbReference type="SMART" id="SM01192">
    <property type="entry name" value="Enolase_C"/>
    <property type="match status" value="1"/>
</dbReference>
<dbReference type="SMART" id="SM01193">
    <property type="entry name" value="Enolase_N"/>
    <property type="match status" value="1"/>
</dbReference>
<dbReference type="SUPFAM" id="SSF51604">
    <property type="entry name" value="Enolase C-terminal domain-like"/>
    <property type="match status" value="1"/>
</dbReference>
<dbReference type="SUPFAM" id="SSF54826">
    <property type="entry name" value="Enolase N-terminal domain-like"/>
    <property type="match status" value="1"/>
</dbReference>
<dbReference type="PROSITE" id="PS00164">
    <property type="entry name" value="ENOLASE"/>
    <property type="match status" value="1"/>
</dbReference>
<organism>
    <name type="scientific">Bdellovibrio bacteriovorus (strain ATCC 15356 / DSM 50701 / NCIMB 9529 / HD100)</name>
    <dbReference type="NCBI Taxonomy" id="264462"/>
    <lineage>
        <taxon>Bacteria</taxon>
        <taxon>Pseudomonadati</taxon>
        <taxon>Bdellovibrionota</taxon>
        <taxon>Bdellovibrionia</taxon>
        <taxon>Bdellovibrionales</taxon>
        <taxon>Pseudobdellovibrionaceae</taxon>
        <taxon>Bdellovibrio</taxon>
    </lineage>
</organism>
<sequence>MSEIISVISREILDSRGNPTVEVEVTTADGNMGRAAVPSGASTGAHEACELRDGDKNRFLGKGVYKAVDNVREKIAPEIVGLQATEQVYIDKILRDIDGTENKSNLGANAILGVSLAVAKAAAKDCRLPLYRYVGGSQASRLPVPLMNVLNGGAHANNGLDIQEFMIVPTVNNSYAESLRAGTEIFHTLKKILAKKGLSTAVGDEGGFAPKLGSNQEALDLLMNAIVDAGYDPGQNVFLALDVAATEMFKEGKYEWQGGHISPTELLGIYKSWAEKYPLVSIEDGFAEDDWDSWVQSTAQMGSTMQLIGDDLFVTNPKRLRMGLEKKAGNALLVKVNQIGTLTETYEAVNLAQRNKFRTIMSHRSGETEDVTIADLAVGLNCHQIKTGSLCRGERTAKYNQLLRIEEDLGGMGLYWDKAAFR</sequence>
<keyword id="KW-0963">Cytoplasm</keyword>
<keyword id="KW-0324">Glycolysis</keyword>
<keyword id="KW-0456">Lyase</keyword>
<keyword id="KW-0460">Magnesium</keyword>
<keyword id="KW-0479">Metal-binding</keyword>
<keyword id="KW-1185">Reference proteome</keyword>
<keyword id="KW-0964">Secreted</keyword>
<protein>
    <recommendedName>
        <fullName evidence="1">Enolase</fullName>
        <ecNumber evidence="1">4.2.1.11</ecNumber>
    </recommendedName>
    <alternativeName>
        <fullName evidence="1">2-phospho-D-glycerate hydro-lyase</fullName>
    </alternativeName>
    <alternativeName>
        <fullName evidence="1">2-phosphoglycerate dehydratase</fullName>
    </alternativeName>
</protein>
<comment type="function">
    <text evidence="1">Catalyzes the reversible conversion of 2-phosphoglycerate (2-PG) into phosphoenolpyruvate (PEP). It is essential for the degradation of carbohydrates via glycolysis.</text>
</comment>
<comment type="catalytic activity">
    <reaction evidence="1">
        <text>(2R)-2-phosphoglycerate = phosphoenolpyruvate + H2O</text>
        <dbReference type="Rhea" id="RHEA:10164"/>
        <dbReference type="ChEBI" id="CHEBI:15377"/>
        <dbReference type="ChEBI" id="CHEBI:58289"/>
        <dbReference type="ChEBI" id="CHEBI:58702"/>
        <dbReference type="EC" id="4.2.1.11"/>
    </reaction>
</comment>
<comment type="cofactor">
    <cofactor evidence="1">
        <name>Mg(2+)</name>
        <dbReference type="ChEBI" id="CHEBI:18420"/>
    </cofactor>
    <text evidence="1">Binds a second Mg(2+) ion via substrate during catalysis.</text>
</comment>
<comment type="pathway">
    <text evidence="1">Carbohydrate degradation; glycolysis; pyruvate from D-glyceraldehyde 3-phosphate: step 4/5.</text>
</comment>
<comment type="subcellular location">
    <subcellularLocation>
        <location evidence="1">Cytoplasm</location>
    </subcellularLocation>
    <subcellularLocation>
        <location evidence="1">Secreted</location>
    </subcellularLocation>
    <subcellularLocation>
        <location evidence="1">Cell surface</location>
    </subcellularLocation>
    <text evidence="1">Fractions of enolase are present in both the cytoplasm and on the cell surface.</text>
</comment>
<comment type="similarity">
    <text evidence="1">Belongs to the enolase family.</text>
</comment>
<evidence type="ECO:0000255" key="1">
    <source>
        <dbReference type="HAMAP-Rule" id="MF_00318"/>
    </source>
</evidence>
<feature type="chain" id="PRO_0000133845" description="Enolase">
    <location>
        <begin position="1"/>
        <end position="422"/>
    </location>
</feature>
<feature type="active site" description="Proton donor" evidence="1">
    <location>
        <position position="205"/>
    </location>
</feature>
<feature type="active site" description="Proton acceptor" evidence="1">
    <location>
        <position position="335"/>
    </location>
</feature>
<feature type="binding site" evidence="1">
    <location>
        <position position="163"/>
    </location>
    <ligand>
        <name>(2R)-2-phosphoglycerate</name>
        <dbReference type="ChEBI" id="CHEBI:58289"/>
    </ligand>
</feature>
<feature type="binding site" evidence="1">
    <location>
        <position position="242"/>
    </location>
    <ligand>
        <name>Mg(2+)</name>
        <dbReference type="ChEBI" id="CHEBI:18420"/>
    </ligand>
</feature>
<feature type="binding site" evidence="1">
    <location>
        <position position="283"/>
    </location>
    <ligand>
        <name>Mg(2+)</name>
        <dbReference type="ChEBI" id="CHEBI:18420"/>
    </ligand>
</feature>
<feature type="binding site" evidence="1">
    <location>
        <position position="310"/>
    </location>
    <ligand>
        <name>Mg(2+)</name>
        <dbReference type="ChEBI" id="CHEBI:18420"/>
    </ligand>
</feature>
<feature type="binding site" evidence="1">
    <location>
        <position position="335"/>
    </location>
    <ligand>
        <name>(2R)-2-phosphoglycerate</name>
        <dbReference type="ChEBI" id="CHEBI:58289"/>
    </ligand>
</feature>
<feature type="binding site" evidence="1">
    <location>
        <position position="364"/>
    </location>
    <ligand>
        <name>(2R)-2-phosphoglycerate</name>
        <dbReference type="ChEBI" id="CHEBI:58289"/>
    </ligand>
</feature>
<feature type="binding site" evidence="1">
    <location>
        <position position="365"/>
    </location>
    <ligand>
        <name>(2R)-2-phosphoglycerate</name>
        <dbReference type="ChEBI" id="CHEBI:58289"/>
    </ligand>
</feature>
<feature type="binding site" evidence="1">
    <location>
        <position position="386"/>
    </location>
    <ligand>
        <name>(2R)-2-phosphoglycerate</name>
        <dbReference type="ChEBI" id="CHEBI:58289"/>
    </ligand>
</feature>
<name>ENO_BDEBA</name>
<gene>
    <name evidence="1" type="primary">eno</name>
    <name type="ordered locus">Bd0796</name>
</gene>
<reference key="1">
    <citation type="journal article" date="2004" name="Science">
        <title>A predator unmasked: life cycle of Bdellovibrio bacteriovorus from a genomic perspective.</title>
        <authorList>
            <person name="Rendulic S."/>
            <person name="Jagtap P."/>
            <person name="Rosinus A."/>
            <person name="Eppinger M."/>
            <person name="Baar C."/>
            <person name="Lanz C."/>
            <person name="Keller H."/>
            <person name="Lambert C."/>
            <person name="Evans K.J."/>
            <person name="Goesmann A."/>
            <person name="Meyer F."/>
            <person name="Sockett R.E."/>
            <person name="Schuster S.C."/>
        </authorList>
    </citation>
    <scope>NUCLEOTIDE SEQUENCE [LARGE SCALE GENOMIC DNA]</scope>
    <source>
        <strain>ATCC 15356 / DSM 50701 / NCIMB 9529 / HD100</strain>
    </source>
</reference>
<accession>Q6MPQ2</accession>
<proteinExistence type="inferred from homology"/>